<comment type="function">
    <text evidence="1">Chaperone involved in the maturation of iron-sulfur cluster-containing proteins. Has a low intrinsic ATPase activity which is markedly stimulated by HscB.</text>
</comment>
<comment type="similarity">
    <text evidence="1">Belongs to the heat shock protein 70 family.</text>
</comment>
<feature type="chain" id="PRO_1000131656" description="Chaperone protein HscA homolog">
    <location>
        <begin position="1"/>
        <end position="619"/>
    </location>
</feature>
<evidence type="ECO:0000255" key="1">
    <source>
        <dbReference type="HAMAP-Rule" id="MF_00679"/>
    </source>
</evidence>
<name>HSCA_ACIBC</name>
<gene>
    <name evidence="1" type="primary">hscA</name>
    <name type="ordered locus">ACICU_01655</name>
</gene>
<accession>B2HZI1</accession>
<dbReference type="EMBL" id="CP000863">
    <property type="protein sequence ID" value="ACC56967.1"/>
    <property type="molecule type" value="Genomic_DNA"/>
</dbReference>
<dbReference type="RefSeq" id="WP_001196572.1">
    <property type="nucleotide sequence ID" value="NZ_CP031380.1"/>
</dbReference>
<dbReference type="SMR" id="B2HZI1"/>
<dbReference type="KEGG" id="abc:ACICU_01655"/>
<dbReference type="HOGENOM" id="CLU_005965_2_3_6"/>
<dbReference type="Proteomes" id="UP000008839">
    <property type="component" value="Chromosome"/>
</dbReference>
<dbReference type="GO" id="GO:0005524">
    <property type="term" value="F:ATP binding"/>
    <property type="evidence" value="ECO:0007669"/>
    <property type="project" value="UniProtKB-KW"/>
</dbReference>
<dbReference type="GO" id="GO:0016887">
    <property type="term" value="F:ATP hydrolysis activity"/>
    <property type="evidence" value="ECO:0007669"/>
    <property type="project" value="UniProtKB-UniRule"/>
</dbReference>
<dbReference type="GO" id="GO:0140662">
    <property type="term" value="F:ATP-dependent protein folding chaperone"/>
    <property type="evidence" value="ECO:0007669"/>
    <property type="project" value="InterPro"/>
</dbReference>
<dbReference type="GO" id="GO:0051082">
    <property type="term" value="F:unfolded protein binding"/>
    <property type="evidence" value="ECO:0007669"/>
    <property type="project" value="InterPro"/>
</dbReference>
<dbReference type="GO" id="GO:0016226">
    <property type="term" value="P:iron-sulfur cluster assembly"/>
    <property type="evidence" value="ECO:0007669"/>
    <property type="project" value="InterPro"/>
</dbReference>
<dbReference type="CDD" id="cd10236">
    <property type="entry name" value="ASKHA_NBD_HSP70_HscA"/>
    <property type="match status" value="1"/>
</dbReference>
<dbReference type="FunFam" id="3.30.420.40:FF:000046">
    <property type="entry name" value="Chaperone protein HscA"/>
    <property type="match status" value="1"/>
</dbReference>
<dbReference type="Gene3D" id="1.20.1270.10">
    <property type="match status" value="1"/>
</dbReference>
<dbReference type="Gene3D" id="3.30.420.40">
    <property type="match status" value="2"/>
</dbReference>
<dbReference type="Gene3D" id="3.90.640.10">
    <property type="entry name" value="Actin, Chain A, domain 4"/>
    <property type="match status" value="1"/>
</dbReference>
<dbReference type="Gene3D" id="2.60.34.10">
    <property type="entry name" value="Substrate Binding Domain Of DNAk, Chain A, domain 1"/>
    <property type="match status" value="1"/>
</dbReference>
<dbReference type="HAMAP" id="MF_00679">
    <property type="entry name" value="HscA"/>
    <property type="match status" value="1"/>
</dbReference>
<dbReference type="InterPro" id="IPR043129">
    <property type="entry name" value="ATPase_NBD"/>
</dbReference>
<dbReference type="InterPro" id="IPR018181">
    <property type="entry name" value="Heat_shock_70_CS"/>
</dbReference>
<dbReference type="InterPro" id="IPR042039">
    <property type="entry name" value="HscA_NBD"/>
</dbReference>
<dbReference type="InterPro" id="IPR029048">
    <property type="entry name" value="HSP70_C_sf"/>
</dbReference>
<dbReference type="InterPro" id="IPR029047">
    <property type="entry name" value="HSP70_peptide-bd_sf"/>
</dbReference>
<dbReference type="InterPro" id="IPR013126">
    <property type="entry name" value="Hsp_70_fam"/>
</dbReference>
<dbReference type="InterPro" id="IPR010236">
    <property type="entry name" value="ISC_FeS_clus_asmbl_HscA"/>
</dbReference>
<dbReference type="NCBIfam" id="TIGR01991">
    <property type="entry name" value="HscA"/>
    <property type="match status" value="1"/>
</dbReference>
<dbReference type="NCBIfam" id="NF003520">
    <property type="entry name" value="PRK05183.1"/>
    <property type="match status" value="1"/>
</dbReference>
<dbReference type="PANTHER" id="PTHR19375">
    <property type="entry name" value="HEAT SHOCK PROTEIN 70KDA"/>
    <property type="match status" value="1"/>
</dbReference>
<dbReference type="Pfam" id="PF00012">
    <property type="entry name" value="HSP70"/>
    <property type="match status" value="1"/>
</dbReference>
<dbReference type="PRINTS" id="PR00301">
    <property type="entry name" value="HEATSHOCK70"/>
</dbReference>
<dbReference type="SUPFAM" id="SSF53067">
    <property type="entry name" value="Actin-like ATPase domain"/>
    <property type="match status" value="2"/>
</dbReference>
<dbReference type="SUPFAM" id="SSF100934">
    <property type="entry name" value="Heat shock protein 70kD (HSP70), C-terminal subdomain"/>
    <property type="match status" value="1"/>
</dbReference>
<dbReference type="SUPFAM" id="SSF100920">
    <property type="entry name" value="Heat shock protein 70kD (HSP70), peptide-binding domain"/>
    <property type="match status" value="1"/>
</dbReference>
<dbReference type="PROSITE" id="PS00297">
    <property type="entry name" value="HSP70_1"/>
    <property type="match status" value="1"/>
</dbReference>
<dbReference type="PROSITE" id="PS00329">
    <property type="entry name" value="HSP70_2"/>
    <property type="match status" value="1"/>
</dbReference>
<organism>
    <name type="scientific">Acinetobacter baumannii (strain ACICU)</name>
    <dbReference type="NCBI Taxonomy" id="405416"/>
    <lineage>
        <taxon>Bacteria</taxon>
        <taxon>Pseudomonadati</taxon>
        <taxon>Pseudomonadota</taxon>
        <taxon>Gammaproteobacteria</taxon>
        <taxon>Moraxellales</taxon>
        <taxon>Moraxellaceae</taxon>
        <taxon>Acinetobacter</taxon>
        <taxon>Acinetobacter calcoaceticus/baumannii complex</taxon>
    </lineage>
</organism>
<sequence length="619" mass="67822">MALLQIAEPGQSSAPHQHRIAIGIDLGTTHSLVATVLSGKPKVLNDVQNRRLLPSIVHYGDNTTHYGEEAKPFIIADPKNTIVSVKRFMGRSKADIKFQHPYELVGSENEMPAFETRAGRKTPVEISAEILKQLKDRAEDSLQNPVNGAVITVPAYFDEAQRQATRDAAQLAGLNVLRLLNEPTAAAVAYGLDQESNLATDRNYVIYDLGGGTFDVSILRFSQGVFEVLATGGHTALGGDDLDRLIVKWAKKQLNIDVLSDEDYAVFIVAARQAKEQLSTQDSVELKLLEATLTLDRPTFESIIQVALDKTISVCKRVLRDAKLELTDIQNVVLVGGSTRSYAVQKAVREVFAQEPLCTINPDEVVAIGASITANQLIGNSQDGSLLLDVTPLSLGLETMGGLVERLISRNTAIPVARRQEFTTYQDGQTAMLIHVVQGERDLVEHCRSLGRFVLHGIPPMTAGQARIEVTFQVDADGLLTVSAREATSGVQAHIDIKPSYGLSEADTERLLIEGFQHAEEDKNLRHLKETKVEAERELEALEQALKVDADLLDEKQLDALNSAKESLKAQLEGSDIQAIEHAVQQLKVHSDAFAALRMNRHIDHALKGTKLDDWSKSN</sequence>
<reference key="1">
    <citation type="journal article" date="2008" name="Antimicrob. Agents Chemother.">
        <title>Whole-genome pyrosequencing of an epidemic multidrug-resistant Acinetobacter baumannii strain belonging to the European clone II group.</title>
        <authorList>
            <person name="Iacono M."/>
            <person name="Villa L."/>
            <person name="Fortini D."/>
            <person name="Bordoni R."/>
            <person name="Imperi F."/>
            <person name="Bonnal R.J."/>
            <person name="Sicheritz-Ponten T."/>
            <person name="De Bellis G."/>
            <person name="Visca P."/>
            <person name="Cassone A."/>
            <person name="Carattoli A."/>
        </authorList>
    </citation>
    <scope>NUCLEOTIDE SEQUENCE [LARGE SCALE GENOMIC DNA]</scope>
    <source>
        <strain>ACICU</strain>
    </source>
</reference>
<keyword id="KW-0067">ATP-binding</keyword>
<keyword id="KW-0143">Chaperone</keyword>
<keyword id="KW-0547">Nucleotide-binding</keyword>
<proteinExistence type="inferred from homology"/>
<protein>
    <recommendedName>
        <fullName evidence="1">Chaperone protein HscA homolog</fullName>
    </recommendedName>
</protein>